<proteinExistence type="inferred from homology"/>
<protein>
    <recommendedName>
        <fullName>Uncharacterized membrane protein C30D10.09c</fullName>
    </recommendedName>
</protein>
<organism>
    <name type="scientific">Schizosaccharomyces pombe (strain 972 / ATCC 24843)</name>
    <name type="common">Fission yeast</name>
    <dbReference type="NCBI Taxonomy" id="284812"/>
    <lineage>
        <taxon>Eukaryota</taxon>
        <taxon>Fungi</taxon>
        <taxon>Dikarya</taxon>
        <taxon>Ascomycota</taxon>
        <taxon>Taphrinomycotina</taxon>
        <taxon>Schizosaccharomycetes</taxon>
        <taxon>Schizosaccharomycetales</taxon>
        <taxon>Schizosaccharomycetaceae</taxon>
        <taxon>Schizosaccharomyces</taxon>
    </lineage>
</organism>
<reference key="1">
    <citation type="journal article" date="2002" name="Nature">
        <title>The genome sequence of Schizosaccharomyces pombe.</title>
        <authorList>
            <person name="Wood V."/>
            <person name="Gwilliam R."/>
            <person name="Rajandream M.A."/>
            <person name="Lyne M.H."/>
            <person name="Lyne R."/>
            <person name="Stewart A."/>
            <person name="Sgouros J.G."/>
            <person name="Peat N."/>
            <person name="Hayles J."/>
            <person name="Baker S.G."/>
            <person name="Basham D."/>
            <person name="Bowman S."/>
            <person name="Brooks K."/>
            <person name="Brown D."/>
            <person name="Brown S."/>
            <person name="Chillingworth T."/>
            <person name="Churcher C.M."/>
            <person name="Collins M."/>
            <person name="Connor R."/>
            <person name="Cronin A."/>
            <person name="Davis P."/>
            <person name="Feltwell T."/>
            <person name="Fraser A."/>
            <person name="Gentles S."/>
            <person name="Goble A."/>
            <person name="Hamlin N."/>
            <person name="Harris D.E."/>
            <person name="Hidalgo J."/>
            <person name="Hodgson G."/>
            <person name="Holroyd S."/>
            <person name="Hornsby T."/>
            <person name="Howarth S."/>
            <person name="Huckle E.J."/>
            <person name="Hunt S."/>
            <person name="Jagels K."/>
            <person name="James K.D."/>
            <person name="Jones L."/>
            <person name="Jones M."/>
            <person name="Leather S."/>
            <person name="McDonald S."/>
            <person name="McLean J."/>
            <person name="Mooney P."/>
            <person name="Moule S."/>
            <person name="Mungall K.L."/>
            <person name="Murphy L.D."/>
            <person name="Niblett D."/>
            <person name="Odell C."/>
            <person name="Oliver K."/>
            <person name="O'Neil S."/>
            <person name="Pearson D."/>
            <person name="Quail M.A."/>
            <person name="Rabbinowitsch E."/>
            <person name="Rutherford K.M."/>
            <person name="Rutter S."/>
            <person name="Saunders D."/>
            <person name="Seeger K."/>
            <person name="Sharp S."/>
            <person name="Skelton J."/>
            <person name="Simmonds M.N."/>
            <person name="Squares R."/>
            <person name="Squares S."/>
            <person name="Stevens K."/>
            <person name="Taylor K."/>
            <person name="Taylor R.G."/>
            <person name="Tivey A."/>
            <person name="Walsh S.V."/>
            <person name="Warren T."/>
            <person name="Whitehead S."/>
            <person name="Woodward J.R."/>
            <person name="Volckaert G."/>
            <person name="Aert R."/>
            <person name="Robben J."/>
            <person name="Grymonprez B."/>
            <person name="Weltjens I."/>
            <person name="Vanstreels E."/>
            <person name="Rieger M."/>
            <person name="Schaefer M."/>
            <person name="Mueller-Auer S."/>
            <person name="Gabel C."/>
            <person name="Fuchs M."/>
            <person name="Duesterhoeft A."/>
            <person name="Fritzc C."/>
            <person name="Holzer E."/>
            <person name="Moestl D."/>
            <person name="Hilbert H."/>
            <person name="Borzym K."/>
            <person name="Langer I."/>
            <person name="Beck A."/>
            <person name="Lehrach H."/>
            <person name="Reinhardt R."/>
            <person name="Pohl T.M."/>
            <person name="Eger P."/>
            <person name="Zimmermann W."/>
            <person name="Wedler H."/>
            <person name="Wambutt R."/>
            <person name="Purnelle B."/>
            <person name="Goffeau A."/>
            <person name="Cadieu E."/>
            <person name="Dreano S."/>
            <person name="Gloux S."/>
            <person name="Lelaure V."/>
            <person name="Mottier S."/>
            <person name="Galibert F."/>
            <person name="Aves S.J."/>
            <person name="Xiang Z."/>
            <person name="Hunt C."/>
            <person name="Moore K."/>
            <person name="Hurst S.M."/>
            <person name="Lucas M."/>
            <person name="Rochet M."/>
            <person name="Gaillardin C."/>
            <person name="Tallada V.A."/>
            <person name="Garzon A."/>
            <person name="Thode G."/>
            <person name="Daga R.R."/>
            <person name="Cruzado L."/>
            <person name="Jimenez J."/>
            <person name="Sanchez M."/>
            <person name="del Rey F."/>
            <person name="Benito J."/>
            <person name="Dominguez A."/>
            <person name="Revuelta J.L."/>
            <person name="Moreno S."/>
            <person name="Armstrong J."/>
            <person name="Forsburg S.L."/>
            <person name="Cerutti L."/>
            <person name="Lowe T."/>
            <person name="McCombie W.R."/>
            <person name="Paulsen I."/>
            <person name="Potashkin J."/>
            <person name="Shpakovski G.V."/>
            <person name="Ussery D."/>
            <person name="Barrell B.G."/>
            <person name="Nurse P."/>
        </authorList>
    </citation>
    <scope>NUCLEOTIDE SEQUENCE [LARGE SCALE GENOMIC DNA]</scope>
    <source>
        <strain>972 / ATCC 24843</strain>
    </source>
</reference>
<reference key="2">
    <citation type="journal article" date="2006" name="Nat. Biotechnol.">
        <title>ORFeome cloning and global analysis of protein localization in the fission yeast Schizosaccharomyces pombe.</title>
        <authorList>
            <person name="Matsuyama A."/>
            <person name="Arai R."/>
            <person name="Yashiroda Y."/>
            <person name="Shirai A."/>
            <person name="Kamata A."/>
            <person name="Sekido S."/>
            <person name="Kobayashi Y."/>
            <person name="Hashimoto A."/>
            <person name="Hamamoto M."/>
            <person name="Hiraoka Y."/>
            <person name="Horinouchi S."/>
            <person name="Yoshida M."/>
        </authorList>
    </citation>
    <scope>SUBCELLULAR LOCATION [LARGE SCALE ANALYSIS]</scope>
</reference>
<sequence>MQLLMLEQISLASSVVATTVLVAPVLSTIINLLTNFGQRIFIAADSSKSTSMEFLSTIIGAGYPIYKTYLLLELPSKRSQLLPKAFQLRNEEHKSIEEERRRLMAYWCVYGCVTAAESILGRFLSWVPFYSTSKIVFWLWLLNPRTQGAAFIYASYISPFLSDHKAAINNFLEKLVQFTTRQPLVLNAWALVKSLIDKLPKGDVEAPGSDADTKKSK</sequence>
<evidence type="ECO:0000255" key="1"/>
<evidence type="ECO:0000305" key="2"/>
<feature type="chain" id="PRO_0000315969" description="Uncharacterized membrane protein C30D10.09c">
    <location>
        <begin position="1"/>
        <end position="217"/>
    </location>
</feature>
<feature type="transmembrane region" description="Helical" evidence="1">
    <location>
        <begin position="9"/>
        <end position="29"/>
    </location>
</feature>
<feature type="transmembrane region" description="Helical" evidence="1">
    <location>
        <begin position="54"/>
        <end position="74"/>
    </location>
</feature>
<feature type="transmembrane region" description="Helical" evidence="1">
    <location>
        <begin position="103"/>
        <end position="125"/>
    </location>
</feature>
<feature type="transmembrane region" description="Helical" evidence="1">
    <location>
        <begin position="135"/>
        <end position="157"/>
    </location>
</feature>
<dbReference type="EMBL" id="CU329671">
    <property type="protein sequence ID" value="CAB10804.1"/>
    <property type="molecule type" value="Genomic_DNA"/>
</dbReference>
<dbReference type="PIR" id="T40187">
    <property type="entry name" value="T40187"/>
</dbReference>
<dbReference type="RefSeq" id="NP_596276.1">
    <property type="nucleotide sequence ID" value="NM_001022197.2"/>
</dbReference>
<dbReference type="BioGRID" id="276811">
    <property type="interactions" value="2"/>
</dbReference>
<dbReference type="FunCoup" id="O14355">
    <property type="interactions" value="5"/>
</dbReference>
<dbReference type="STRING" id="284812.O14355"/>
<dbReference type="PaxDb" id="4896-SPBC30D10.09c.1"/>
<dbReference type="EnsemblFungi" id="SPBC30D10.09c.1">
    <property type="protein sequence ID" value="SPBC30D10.09c.1:pep"/>
    <property type="gene ID" value="SPBC30D10.09c"/>
</dbReference>
<dbReference type="KEGG" id="spo:2540280"/>
<dbReference type="PomBase" id="SPBC30D10.09c"/>
<dbReference type="VEuPathDB" id="FungiDB:SPBC30D10.09c"/>
<dbReference type="eggNOG" id="KOG1726">
    <property type="taxonomic scope" value="Eukaryota"/>
</dbReference>
<dbReference type="HOGENOM" id="CLU_110823_0_0_1"/>
<dbReference type="InParanoid" id="O14355"/>
<dbReference type="OMA" id="RLMAYWC"/>
<dbReference type="PhylomeDB" id="O14355"/>
<dbReference type="PRO" id="PR:O14355"/>
<dbReference type="Proteomes" id="UP000002485">
    <property type="component" value="Chromosome II"/>
</dbReference>
<dbReference type="GO" id="GO:0005783">
    <property type="term" value="C:endoplasmic reticulum"/>
    <property type="evidence" value="ECO:0000269"/>
    <property type="project" value="PomBase"/>
</dbReference>
<dbReference type="GO" id="GO:0005789">
    <property type="term" value="C:endoplasmic reticulum membrane"/>
    <property type="evidence" value="ECO:0007669"/>
    <property type="project" value="UniProtKB-SubCell"/>
</dbReference>
<dbReference type="GO" id="GO:0061908">
    <property type="term" value="C:phagophore"/>
    <property type="evidence" value="ECO:0000314"/>
    <property type="project" value="PomBase"/>
</dbReference>
<dbReference type="GO" id="GO:0012506">
    <property type="term" value="C:vesicle membrane"/>
    <property type="evidence" value="ECO:0000269"/>
    <property type="project" value="PomBase"/>
</dbReference>
<dbReference type="GO" id="GO:0180020">
    <property type="term" value="F:membrane bending activity"/>
    <property type="evidence" value="ECO:0000314"/>
    <property type="project" value="PomBase"/>
</dbReference>
<dbReference type="GO" id="GO:0006914">
    <property type="term" value="P:autophagy"/>
    <property type="evidence" value="ECO:0000315"/>
    <property type="project" value="PomBase"/>
</dbReference>
<dbReference type="GO" id="GO:0090158">
    <property type="term" value="P:endoplasmic reticulum membrane organization"/>
    <property type="evidence" value="ECO:0000269"/>
    <property type="project" value="PomBase"/>
</dbReference>
<dbReference type="GO" id="GO:1990809">
    <property type="term" value="P:endoplasmic reticulum tubular network membrane organization"/>
    <property type="evidence" value="ECO:0000250"/>
    <property type="project" value="PomBase"/>
</dbReference>
<dbReference type="GO" id="GO:0016236">
    <property type="term" value="P:macroautophagy"/>
    <property type="evidence" value="ECO:0000315"/>
    <property type="project" value="PomBase"/>
</dbReference>
<dbReference type="GO" id="GO:0044804">
    <property type="term" value="P:nucleophagy"/>
    <property type="evidence" value="ECO:0000315"/>
    <property type="project" value="PomBase"/>
</dbReference>
<dbReference type="GO" id="GO:2000786">
    <property type="term" value="P:positive regulation of autophagosome assembly"/>
    <property type="evidence" value="ECO:0000315"/>
    <property type="project" value="PomBase"/>
</dbReference>
<dbReference type="GO" id="GO:0061709">
    <property type="term" value="P:reticulophagy"/>
    <property type="evidence" value="ECO:0000315"/>
    <property type="project" value="PomBase"/>
</dbReference>
<dbReference type="InterPro" id="IPR004345">
    <property type="entry name" value="TB2_DP1_HVA22"/>
</dbReference>
<dbReference type="PANTHER" id="PTHR12300">
    <property type="entry name" value="HVA22-LIKE PROTEINS"/>
    <property type="match status" value="1"/>
</dbReference>
<dbReference type="PANTHER" id="PTHR12300:SF161">
    <property type="entry name" value="RECEPTOR EXPRESSION-ENHANCING PROTEIN"/>
    <property type="match status" value="1"/>
</dbReference>
<dbReference type="Pfam" id="PF03134">
    <property type="entry name" value="TB2_DP1_HVA22"/>
    <property type="match status" value="1"/>
</dbReference>
<gene>
    <name type="ORF">SPBC30D10.09c</name>
</gene>
<keyword id="KW-0256">Endoplasmic reticulum</keyword>
<keyword id="KW-0472">Membrane</keyword>
<keyword id="KW-1185">Reference proteome</keyword>
<keyword id="KW-0812">Transmembrane</keyword>
<keyword id="KW-1133">Transmembrane helix</keyword>
<comment type="subcellular location">
    <subcellularLocation>
        <location evidence="2">Endoplasmic reticulum membrane</location>
        <topology evidence="2">Multi-pass membrane protein</topology>
    </subcellularLocation>
</comment>
<comment type="similarity">
    <text evidence="2">Belongs to the DP1 family.</text>
</comment>
<name>YB49_SCHPO</name>
<accession>O14355</accession>